<sequence length="212" mass="23707">MAQLLESVIDAAKGMKLAKLEGDAAFFWAPGGNTSVLVCDRPPQMRQRFRTRREQIKKDHPCDCKSCEQRDNLSIKFVAHEGEVAEQKVKRNVELAGVDVILVHRMLKNEVPVSEYLFMTDVVAQCLDESVRKLATPLTHDFEGIGETSTHYIDLATSDMPPAVPDHSFFGLLWADVKFEWHALPYLLGFKKACAGFRSLGRGATEEPAEMG</sequence>
<dbReference type="EMBL" id="AL123456">
    <property type="protein sequence ID" value="CCP45357.1"/>
    <property type="status" value="ALT_SEQ"/>
    <property type="molecule type" value="Genomic_DNA"/>
</dbReference>
<dbReference type="EMBL" id="AL123456">
    <property type="protein sequence ID" value="CCP45358.1"/>
    <property type="status" value="ALT_SEQ"/>
    <property type="molecule type" value="Genomic_DNA"/>
</dbReference>
<dbReference type="PIR" id="E70728">
    <property type="entry name" value="E70728"/>
</dbReference>
<dbReference type="PIR" id="F70728">
    <property type="entry name" value="F70728"/>
</dbReference>
<dbReference type="STRING" id="83332.Rv2562"/>
<dbReference type="PaxDb" id="83332-Rv2562"/>
<dbReference type="TubercuList" id="Rv2561"/>
<dbReference type="TubercuList" id="Rv2562"/>
<dbReference type="eggNOG" id="COG2114">
    <property type="taxonomic scope" value="Bacteria"/>
</dbReference>
<dbReference type="InParanoid" id="P9WL99"/>
<dbReference type="Proteomes" id="UP000001584">
    <property type="component" value="Chromosome"/>
</dbReference>
<dbReference type="InterPro" id="IPR020503">
    <property type="entry name" value="Uncharacterised_Rv2561"/>
</dbReference>
<dbReference type="Pfam" id="PF10851">
    <property type="entry name" value="DUF2652"/>
    <property type="match status" value="1"/>
</dbReference>
<evidence type="ECO:0000305" key="1"/>
<gene>
    <name type="ordered locus">Rv2561/Rv2562</name>
    <name type="ORF">MTCY9C4.07c/MTCY9C4.06c</name>
</gene>
<reference key="1">
    <citation type="journal article" date="1998" name="Nature">
        <title>Deciphering the biology of Mycobacterium tuberculosis from the complete genome sequence.</title>
        <authorList>
            <person name="Cole S.T."/>
            <person name="Brosch R."/>
            <person name="Parkhill J."/>
            <person name="Garnier T."/>
            <person name="Churcher C.M."/>
            <person name="Harris D.E."/>
            <person name="Gordon S.V."/>
            <person name="Eiglmeier K."/>
            <person name="Gas S."/>
            <person name="Barry C.E. III"/>
            <person name="Tekaia F."/>
            <person name="Badcock K."/>
            <person name="Basham D."/>
            <person name="Brown D."/>
            <person name="Chillingworth T."/>
            <person name="Connor R."/>
            <person name="Davies R.M."/>
            <person name="Devlin K."/>
            <person name="Feltwell T."/>
            <person name="Gentles S."/>
            <person name="Hamlin N."/>
            <person name="Holroyd S."/>
            <person name="Hornsby T."/>
            <person name="Jagels K."/>
            <person name="Krogh A."/>
            <person name="McLean J."/>
            <person name="Moule S."/>
            <person name="Murphy L.D."/>
            <person name="Oliver S."/>
            <person name="Osborne J."/>
            <person name="Quail M.A."/>
            <person name="Rajandream M.A."/>
            <person name="Rogers J."/>
            <person name="Rutter S."/>
            <person name="Seeger K."/>
            <person name="Skelton S."/>
            <person name="Squares S."/>
            <person name="Squares R."/>
            <person name="Sulston J.E."/>
            <person name="Taylor K."/>
            <person name="Whitehead S."/>
            <person name="Barrell B.G."/>
        </authorList>
    </citation>
    <scope>NUCLEOTIDE SEQUENCE [LARGE SCALE GENOMIC DNA]</scope>
    <source>
        <strain>ATCC 25618 / H37Rv</strain>
    </source>
</reference>
<comment type="sequence caution" evidence="1">
    <conflict type="erroneous initiation">
        <sequence resource="EMBL-CDS" id="CCP45357"/>
    </conflict>
    <text>Extended N-terminus.</text>
</comment>
<comment type="sequence caution" evidence="1">
    <conflict type="frameshift">
        <sequence resource="EMBL-CDS" id="CCP45357"/>
    </conflict>
    <text>Rv2561 and Rv2562 have been merged into one gene.</text>
</comment>
<comment type="sequence caution" evidence="1">
    <conflict type="erroneous initiation">
        <sequence resource="EMBL-CDS" id="CCP45358"/>
    </conflict>
    <text>Truncated N-terminus.</text>
</comment>
<comment type="sequence caution" evidence="1">
    <conflict type="frameshift">
        <sequence resource="EMBL-CDS" id="CCP45358"/>
    </conflict>
    <text>Rv2561 and Rv2562 have been merged into one gene.</text>
</comment>
<organism>
    <name type="scientific">Mycobacterium tuberculosis (strain ATCC 25618 / H37Rv)</name>
    <dbReference type="NCBI Taxonomy" id="83332"/>
    <lineage>
        <taxon>Bacteria</taxon>
        <taxon>Bacillati</taxon>
        <taxon>Actinomycetota</taxon>
        <taxon>Actinomycetes</taxon>
        <taxon>Mycobacteriales</taxon>
        <taxon>Mycobacteriaceae</taxon>
        <taxon>Mycobacterium</taxon>
        <taxon>Mycobacterium tuberculosis complex</taxon>
    </lineage>
</organism>
<accession>P9WL99</accession>
<accession>L0TCR3</accession>
<accession>L0TCW0</accession>
<accession>Q50736</accession>
<accession>Q50737</accession>
<proteinExistence type="predicted"/>
<feature type="chain" id="PRO_0000104042" description="Uncharacterized protein Rv2561/Rv2562">
    <location>
        <begin position="1"/>
        <end position="212"/>
    </location>
</feature>
<name>Y2561_MYCTU</name>
<keyword id="KW-1185">Reference proteome</keyword>
<protein>
    <recommendedName>
        <fullName>Uncharacterized protein Rv2561/Rv2562</fullName>
    </recommendedName>
</protein>